<sequence>MGRITTDLLRRRAEHNEGCLSNLKEVALHQQDIERIELIGDACRELEILYLCNNYISRIEGLQHLKYLKYLNLAVNNITYIEGLEGCEALERLDLTLNFVADVTCVERLRANAFLDQLHLTGNPCTKVAGYRAYVVHALPQLRELDGEEVIKTERLEARQSKDDISVAVNEEALRLQKRSVSSQRWLHEALTAFPPRYNEKGERLYGHTPEERLQMLREKEEEERRKREEQRERERSSQFGAIREELERKPQRLTAEEEIAKHGRLLLRNEPKLPFTLDEEADDGEAVVLTVKVPRFLSTTLIDVQVEVNYIRVFVKEKLIQVPLSQEVAPSGVNVQRSSVNGELRIRIPYAPHVLQEVSEARRRRQRLLGLLSDDKNEDGTG</sequence>
<keyword id="KW-0131">Cell cycle</keyword>
<keyword id="KW-0966">Cell projection</keyword>
<keyword id="KW-0969">Cilium</keyword>
<keyword id="KW-0175">Coiled coil</keyword>
<keyword id="KW-0963">Cytoplasm</keyword>
<keyword id="KW-0206">Cytoskeleton</keyword>
<keyword id="KW-0217">Developmental protein</keyword>
<keyword id="KW-0282">Flagellum</keyword>
<keyword id="KW-0433">Leucine-rich repeat</keyword>
<keyword id="KW-0677">Repeat</keyword>
<dbReference type="EMBL" id="AF152174">
    <property type="protein sequence ID" value="AAF73195.1"/>
    <property type="molecule type" value="Genomic_DNA"/>
</dbReference>
<dbReference type="SMR" id="Q9NJE9"/>
<dbReference type="GO" id="GO:0036064">
    <property type="term" value="C:ciliary basal body"/>
    <property type="evidence" value="ECO:0000314"/>
    <property type="project" value="UniProtKB"/>
</dbReference>
<dbReference type="GO" id="GO:0005737">
    <property type="term" value="C:cytoplasm"/>
    <property type="evidence" value="ECO:0000314"/>
    <property type="project" value="UniProtKB"/>
</dbReference>
<dbReference type="GO" id="GO:0005856">
    <property type="term" value="C:cytoskeleton"/>
    <property type="evidence" value="ECO:0000314"/>
    <property type="project" value="UniProtKB"/>
</dbReference>
<dbReference type="GO" id="GO:0005829">
    <property type="term" value="C:cytosol"/>
    <property type="evidence" value="ECO:0000250"/>
    <property type="project" value="UniProtKB"/>
</dbReference>
<dbReference type="GO" id="GO:0005576">
    <property type="term" value="C:extracellular region"/>
    <property type="evidence" value="ECO:0007669"/>
    <property type="project" value="GOC"/>
</dbReference>
<dbReference type="GO" id="GO:0031514">
    <property type="term" value="C:motile cilium"/>
    <property type="evidence" value="ECO:0000314"/>
    <property type="project" value="UniProtKB"/>
</dbReference>
<dbReference type="GO" id="GO:0070286">
    <property type="term" value="P:axonemal dynein complex assembly"/>
    <property type="evidence" value="ECO:0000250"/>
    <property type="project" value="UniProtKB"/>
</dbReference>
<dbReference type="GO" id="GO:0007099">
    <property type="term" value="P:centriole replication"/>
    <property type="evidence" value="ECO:0000315"/>
    <property type="project" value="UniProtKB"/>
</dbReference>
<dbReference type="GO" id="GO:0044782">
    <property type="term" value="P:cilium organization"/>
    <property type="evidence" value="ECO:0000315"/>
    <property type="project" value="UniProtKB"/>
</dbReference>
<dbReference type="GO" id="GO:0060287">
    <property type="term" value="P:epithelial cilium movement involved in determination of left/right asymmetry"/>
    <property type="evidence" value="ECO:0000250"/>
    <property type="project" value="UniProtKB"/>
</dbReference>
<dbReference type="GO" id="GO:0003351">
    <property type="term" value="P:epithelial cilium movement involved in extracellular fluid movement"/>
    <property type="evidence" value="ECO:0000250"/>
    <property type="project" value="UniProtKB"/>
</dbReference>
<dbReference type="GO" id="GO:0051649">
    <property type="term" value="P:establishment of localization in cell"/>
    <property type="evidence" value="ECO:0000250"/>
    <property type="project" value="UniProtKB"/>
</dbReference>
<dbReference type="GO" id="GO:0030317">
    <property type="term" value="P:flagellated sperm motility"/>
    <property type="evidence" value="ECO:0000250"/>
    <property type="project" value="UniProtKB"/>
</dbReference>
<dbReference type="GO" id="GO:0036158">
    <property type="term" value="P:outer dynein arm assembly"/>
    <property type="evidence" value="ECO:0000250"/>
    <property type="project" value="UniProtKB"/>
</dbReference>
<dbReference type="GO" id="GO:0061512">
    <property type="term" value="P:protein localization to cilium"/>
    <property type="evidence" value="ECO:0000250"/>
    <property type="project" value="UniProtKB"/>
</dbReference>
<dbReference type="GO" id="GO:0120229">
    <property type="term" value="P:protein localization to motile cilium"/>
    <property type="evidence" value="ECO:0000250"/>
    <property type="project" value="UniProtKB"/>
</dbReference>
<dbReference type="GO" id="GO:0051726">
    <property type="term" value="P:regulation of cell cycle"/>
    <property type="evidence" value="ECO:0000315"/>
    <property type="project" value="UniProtKB"/>
</dbReference>
<dbReference type="FunFam" id="3.80.10.10:FF:000623">
    <property type="entry name" value="Leucine-rich repeat-containing protein"/>
    <property type="match status" value="1"/>
</dbReference>
<dbReference type="Gene3D" id="3.80.10.10">
    <property type="entry name" value="Ribonuclease Inhibitor"/>
    <property type="match status" value="1"/>
</dbReference>
<dbReference type="InterPro" id="IPR056496">
    <property type="entry name" value="CS_DNAAF11_C"/>
</dbReference>
<dbReference type="InterPro" id="IPR001611">
    <property type="entry name" value="Leu-rich_rpt"/>
</dbReference>
<dbReference type="InterPro" id="IPR032675">
    <property type="entry name" value="LRR_dom_sf"/>
</dbReference>
<dbReference type="InterPro" id="IPR003603">
    <property type="entry name" value="U2A'_phosphoprotein32A_C"/>
</dbReference>
<dbReference type="PANTHER" id="PTHR18849:SF0">
    <property type="entry name" value="CILIA- AND FLAGELLA-ASSOCIATED PROTEIN 410-RELATED"/>
    <property type="match status" value="1"/>
</dbReference>
<dbReference type="PANTHER" id="PTHR18849">
    <property type="entry name" value="LEUCINE RICH REPEAT PROTEIN"/>
    <property type="match status" value="1"/>
</dbReference>
<dbReference type="Pfam" id="PF23602">
    <property type="entry name" value="CS_DNAAF11_C"/>
    <property type="match status" value="1"/>
</dbReference>
<dbReference type="Pfam" id="PF14580">
    <property type="entry name" value="LRR_9"/>
    <property type="match status" value="1"/>
</dbReference>
<dbReference type="SMART" id="SM00365">
    <property type="entry name" value="LRR_SD22"/>
    <property type="match status" value="2"/>
</dbReference>
<dbReference type="SMART" id="SM00446">
    <property type="entry name" value="LRRcap"/>
    <property type="match status" value="1"/>
</dbReference>
<dbReference type="SUPFAM" id="SSF52058">
    <property type="entry name" value="L domain-like"/>
    <property type="match status" value="1"/>
</dbReference>
<dbReference type="PROSITE" id="PS51450">
    <property type="entry name" value="LRR"/>
    <property type="match status" value="4"/>
</dbReference>
<proteinExistence type="inferred from homology"/>
<evidence type="ECO:0000255" key="1"/>
<evidence type="ECO:0000256" key="2">
    <source>
        <dbReference type="SAM" id="MobiDB-lite"/>
    </source>
</evidence>
<evidence type="ECO:0000269" key="3">
    <source>
    </source>
</evidence>
<evidence type="ECO:0000305" key="4"/>
<gene>
    <name type="primary">dnaaf11</name>
    <name type="synonym">lrrc6</name>
    <name type="synonym">LRTP</name>
    <name type="synonym">Pho1</name>
</gene>
<reference key="1">
    <citation type="journal article" date="2005" name="Mol. Cell. Biol.">
        <title>An evolutionarily conserved coiled-coil protein implicated in polycystic kidney disease is involved in basal body duplication and flagellar biogenesis in Trypanosoma brucei.</title>
        <authorList>
            <person name="Morgan G.W."/>
            <person name="Denny P.W."/>
            <person name="Vaughan S."/>
            <person name="Goulding D."/>
            <person name="Jeffries T.R."/>
            <person name="Smith D.F."/>
            <person name="Gull K."/>
            <person name="Field M.C."/>
        </authorList>
    </citation>
    <scope>NUCLEOTIDE SEQUENCE [GENOMIC DNA]</scope>
    <scope>FUNCTION</scope>
    <scope>SUBCELLULAR LOCATION</scope>
    <source>
        <strain>427</strain>
    </source>
</reference>
<accession>Q9NJE9</accession>
<feature type="chain" id="PRO_0000415146" description="Dynein axonemal assembly factor 11">
    <location>
        <begin position="1"/>
        <end position="383"/>
    </location>
</feature>
<feature type="repeat" description="LRR 1">
    <location>
        <begin position="20"/>
        <end position="45"/>
    </location>
</feature>
<feature type="repeat" description="LRR 2">
    <location>
        <begin position="46"/>
        <end position="66"/>
    </location>
</feature>
<feature type="repeat" description="LRR 3">
    <location>
        <begin position="67"/>
        <end position="89"/>
    </location>
</feature>
<feature type="repeat" description="LRR 4">
    <location>
        <begin position="90"/>
        <end position="110"/>
    </location>
</feature>
<feature type="domain" description="LRRCT">
    <location>
        <begin position="128"/>
        <end position="146"/>
    </location>
</feature>
<feature type="region of interest" description="Disordered" evidence="2">
    <location>
        <begin position="201"/>
        <end position="244"/>
    </location>
</feature>
<feature type="coiled-coil region" evidence="1">
    <location>
        <begin position="211"/>
        <end position="239"/>
    </location>
</feature>
<organism>
    <name type="scientific">Trypanosoma brucei brucei</name>
    <dbReference type="NCBI Taxonomy" id="5702"/>
    <lineage>
        <taxon>Eukaryota</taxon>
        <taxon>Discoba</taxon>
        <taxon>Euglenozoa</taxon>
        <taxon>Kinetoplastea</taxon>
        <taxon>Metakinetoplastina</taxon>
        <taxon>Trypanosomatida</taxon>
        <taxon>Trypanosomatidae</taxon>
        <taxon>Trypanosoma</taxon>
    </lineage>
</organism>
<comment type="function">
    <text evidence="3">Involved in the regulation of the cell cycle; is required for the basal body replication and new flagellum biogenesis.</text>
</comment>
<comment type="subcellular location">
    <subcellularLocation>
        <location evidence="3">Cytoplasm</location>
        <location evidence="3">Cytoskeleton</location>
    </subcellularLocation>
    <subcellularLocation>
        <location evidence="3">Cytoplasm</location>
        <location evidence="3">Cytoskeleton</location>
        <location evidence="3">Flagellum basal body</location>
    </subcellularLocation>
</comment>
<comment type="similarity">
    <text evidence="4">Belongs to the tilB family.</text>
</comment>
<name>DAA11_TRYBB</name>
<protein>
    <recommendedName>
        <fullName evidence="4">Dynein axonemal assembly factor 11</fullName>
        <shortName evidence="4">DNAAF11</shortName>
    </recommendedName>
    <alternativeName>
        <fullName>Leucine-rich repeat-containing protein 6</fullName>
    </alternativeName>
    <alternativeName>
        <fullName>Leucine-rich testis-specific protein</fullName>
        <shortName>TbLRTP</shortName>
    </alternativeName>
    <alternativeName>
        <fullName>Phosphatase</fullName>
    </alternativeName>
    <alternativeName>
        <fullName>Protein tilB homolog</fullName>
    </alternativeName>
</protein>